<accession>A4TPZ6</accession>
<keyword id="KW-0131">Cell cycle</keyword>
<keyword id="KW-0132">Cell division</keyword>
<keyword id="KW-0997">Cell inner membrane</keyword>
<keyword id="KW-1003">Cell membrane</keyword>
<keyword id="KW-0175">Coiled coil</keyword>
<keyword id="KW-0472">Membrane</keyword>
<keyword id="KW-0812">Transmembrane</keyword>
<keyword id="KW-1133">Transmembrane helix</keyword>
<dbReference type="EMBL" id="CP000668">
    <property type="protein sequence ID" value="ABP41358.1"/>
    <property type="molecule type" value="Genomic_DNA"/>
</dbReference>
<dbReference type="RefSeq" id="WP_002209390.1">
    <property type="nucleotide sequence ID" value="NZ_CP009715.1"/>
</dbReference>
<dbReference type="SMR" id="A4TPZ6"/>
<dbReference type="GeneID" id="57975347"/>
<dbReference type="KEGG" id="ypp:YPDSF_2998"/>
<dbReference type="PATRIC" id="fig|386656.14.peg.1365"/>
<dbReference type="GO" id="GO:0032153">
    <property type="term" value="C:cell division site"/>
    <property type="evidence" value="ECO:0007669"/>
    <property type="project" value="UniProtKB-UniRule"/>
</dbReference>
<dbReference type="GO" id="GO:0030428">
    <property type="term" value="C:cell septum"/>
    <property type="evidence" value="ECO:0007669"/>
    <property type="project" value="TreeGrafter"/>
</dbReference>
<dbReference type="GO" id="GO:0005886">
    <property type="term" value="C:plasma membrane"/>
    <property type="evidence" value="ECO:0007669"/>
    <property type="project" value="UniProtKB-SubCell"/>
</dbReference>
<dbReference type="GO" id="GO:0043093">
    <property type="term" value="P:FtsZ-dependent cytokinesis"/>
    <property type="evidence" value="ECO:0007669"/>
    <property type="project" value="UniProtKB-UniRule"/>
</dbReference>
<dbReference type="Gene3D" id="1.20.5.400">
    <property type="match status" value="1"/>
</dbReference>
<dbReference type="HAMAP" id="MF_00599">
    <property type="entry name" value="FtsB"/>
    <property type="match status" value="1"/>
</dbReference>
<dbReference type="InterPro" id="IPR023081">
    <property type="entry name" value="Cell_div_FtsB"/>
</dbReference>
<dbReference type="InterPro" id="IPR007060">
    <property type="entry name" value="FtsL/DivIC"/>
</dbReference>
<dbReference type="NCBIfam" id="NF002058">
    <property type="entry name" value="PRK00888.1"/>
    <property type="match status" value="1"/>
</dbReference>
<dbReference type="PANTHER" id="PTHR37485">
    <property type="entry name" value="CELL DIVISION PROTEIN FTSB"/>
    <property type="match status" value="1"/>
</dbReference>
<dbReference type="PANTHER" id="PTHR37485:SF1">
    <property type="entry name" value="CELL DIVISION PROTEIN FTSB"/>
    <property type="match status" value="1"/>
</dbReference>
<dbReference type="Pfam" id="PF04977">
    <property type="entry name" value="DivIC"/>
    <property type="match status" value="1"/>
</dbReference>
<gene>
    <name evidence="1" type="primary">ftsB</name>
    <name type="ordered locus">YPDSF_2998</name>
</gene>
<feature type="chain" id="PRO_1000025742" description="Cell division protein FtsB">
    <location>
        <begin position="1"/>
        <end position="106"/>
    </location>
</feature>
<feature type="topological domain" description="Cytoplasmic" evidence="1">
    <location>
        <begin position="1"/>
        <end position="3"/>
    </location>
</feature>
<feature type="transmembrane region" description="Helical" evidence="1">
    <location>
        <begin position="4"/>
        <end position="21"/>
    </location>
</feature>
<feature type="topological domain" description="Periplasmic" evidence="1">
    <location>
        <begin position="22"/>
        <end position="106"/>
    </location>
</feature>
<feature type="coiled-coil region" evidence="1">
    <location>
        <begin position="31"/>
        <end position="62"/>
    </location>
</feature>
<protein>
    <recommendedName>
        <fullName evidence="1">Cell division protein FtsB</fullName>
    </recommendedName>
</protein>
<proteinExistence type="inferred from homology"/>
<comment type="function">
    <text evidence="1">Essential cell division protein. May link together the upstream cell division proteins, which are predominantly cytoplasmic, with the downstream cell division proteins, which are predominantly periplasmic.</text>
</comment>
<comment type="subunit">
    <text evidence="1">Part of a complex composed of FtsB, FtsL and FtsQ.</text>
</comment>
<comment type="subcellular location">
    <subcellularLocation>
        <location evidence="1">Cell inner membrane</location>
        <topology evidence="1">Single-pass type II membrane protein</topology>
    </subcellularLocation>
    <text evidence="1">Localizes to the division septum.</text>
</comment>
<comment type="similarity">
    <text evidence="1">Belongs to the FtsB family.</text>
</comment>
<reference key="1">
    <citation type="submission" date="2007-02" db="EMBL/GenBank/DDBJ databases">
        <title>Complete sequence of chromosome of Yersinia pestis Pestoides F.</title>
        <authorList>
            <consortium name="US DOE Joint Genome Institute"/>
            <person name="Copeland A."/>
            <person name="Lucas S."/>
            <person name="Lapidus A."/>
            <person name="Barry K."/>
            <person name="Detter J.C."/>
            <person name="Glavina del Rio T."/>
            <person name="Hammon N."/>
            <person name="Israni S."/>
            <person name="Dalin E."/>
            <person name="Tice H."/>
            <person name="Pitluck S."/>
            <person name="Di Bartolo G."/>
            <person name="Chain P."/>
            <person name="Malfatti S."/>
            <person name="Shin M."/>
            <person name="Vergez L."/>
            <person name="Schmutz J."/>
            <person name="Larimer F."/>
            <person name="Land M."/>
            <person name="Hauser L."/>
            <person name="Worsham P."/>
            <person name="Chu M."/>
            <person name="Bearden S."/>
            <person name="Garcia E."/>
            <person name="Richardson P."/>
        </authorList>
    </citation>
    <scope>NUCLEOTIDE SEQUENCE [LARGE SCALE GENOMIC DNA]</scope>
    <source>
        <strain>Pestoides F</strain>
    </source>
</reference>
<evidence type="ECO:0000255" key="1">
    <source>
        <dbReference type="HAMAP-Rule" id="MF_00599"/>
    </source>
</evidence>
<name>FTSB_YERPP</name>
<organism>
    <name type="scientific">Yersinia pestis (strain Pestoides F)</name>
    <dbReference type="NCBI Taxonomy" id="386656"/>
    <lineage>
        <taxon>Bacteria</taxon>
        <taxon>Pseudomonadati</taxon>
        <taxon>Pseudomonadota</taxon>
        <taxon>Gammaproteobacteria</taxon>
        <taxon>Enterobacterales</taxon>
        <taxon>Yersiniaceae</taxon>
        <taxon>Yersinia</taxon>
    </lineage>
</organism>
<sequence>MGKLTLLLLVLLGWLQYSLWLGKNGIHDFVRVKEDVAAQEANNSTLKARNDQLFAEIDDLNGGQEAIEERARNELGMIKPGESFYRLVPDQSRRNAGTPSTQNNAQ</sequence>